<gene>
    <name evidence="4" type="primary">strE</name>
</gene>
<proteinExistence type="evidence at protein level"/>
<sequence>MTTHLLVTGAAGFIGSQYVRTLLGPGGPPDVVVTALDALTYAGNPDNLAAVRGHPRYRFERGDICDAPGRRVMAGQDQVVHLAAESHVDRSLLDASVFVRTNVHGTQTLLDAATRHGVASFVQVSTDEVYGSLEHGSWTEDEPLRPNSPYSASKASGDLLALAHHVSHGLDVRVTRCSNNYGPRQFPEKLIPRFITLLMDGHRVPLYGDGLNVREWLHVDDHVRGIEAVRTRGRAGRVYNIGGGATLSNKELVGLLLEAAGADWGSVEYVEDRKGHDRRYAVDSTRIQRELGFAPAVDLADGLAATVAWYHKHRSWWEPLVPAGSLPA</sequence>
<organism>
    <name type="scientific">Streptomyces griseus</name>
    <dbReference type="NCBI Taxonomy" id="1911"/>
    <lineage>
        <taxon>Bacteria</taxon>
        <taxon>Bacillati</taxon>
        <taxon>Actinomycetota</taxon>
        <taxon>Actinomycetes</taxon>
        <taxon>Kitasatosporales</taxon>
        <taxon>Streptomycetaceae</taxon>
        <taxon>Streptomyces</taxon>
    </lineage>
</organism>
<comment type="function">
    <text evidence="2 3">Involved in the biosynthesis of the streptose moiety of streptomycin (PubMed:1661369). Catalyzes the dehydration of dTDP-D-glucose to form dTDP-6-deoxy-D-xylo-4-hexulose via a three-step process involving oxidation, dehydration and reduction (By similarity).</text>
</comment>
<comment type="catalytic activity">
    <reaction evidence="2">
        <text>dTDP-alpha-D-glucose = dTDP-4-dehydro-6-deoxy-alpha-D-glucose + H2O</text>
        <dbReference type="Rhea" id="RHEA:17221"/>
        <dbReference type="ChEBI" id="CHEBI:15377"/>
        <dbReference type="ChEBI" id="CHEBI:57477"/>
        <dbReference type="ChEBI" id="CHEBI:57649"/>
        <dbReference type="EC" id="4.2.1.46"/>
    </reaction>
</comment>
<comment type="cofactor">
    <cofactor evidence="2">
        <name>NAD(+)</name>
        <dbReference type="ChEBI" id="CHEBI:57540"/>
    </cofactor>
    <text evidence="2">Binds 1 NAD(+) per subunit.</text>
</comment>
<comment type="pathway">
    <text evidence="6">Antibiotic biosynthesis; streptomycin biosynthesis.</text>
</comment>
<comment type="subunit">
    <text evidence="2">Homodimer.</text>
</comment>
<comment type="similarity">
    <text evidence="5">Belongs to the NAD(P)-dependent epimerase/dehydratase family. dTDP-glucose dehydratase subfamily.</text>
</comment>
<feature type="chain" id="PRO_0000183248" description="dTDP-glucose 4,6-dehydratase">
    <location>
        <begin position="1"/>
        <end position="328"/>
    </location>
</feature>
<feature type="active site" description="Proton donor" evidence="2">
    <location>
        <position position="127"/>
    </location>
</feature>
<feature type="active site" description="Proton acceptor" evidence="2">
    <location>
        <position position="128"/>
    </location>
</feature>
<feature type="active site" description="Proton acceptor" evidence="2">
    <location>
        <position position="150"/>
    </location>
</feature>
<feature type="binding site" evidence="2">
    <location>
        <begin position="13"/>
        <end position="14"/>
    </location>
    <ligand>
        <name>NAD(+)</name>
        <dbReference type="ChEBI" id="CHEBI:57540"/>
    </ligand>
</feature>
<feature type="binding site" evidence="2">
    <location>
        <begin position="37"/>
        <end position="40"/>
    </location>
    <ligand>
        <name>NAD(+)</name>
        <dbReference type="ChEBI" id="CHEBI:57540"/>
    </ligand>
</feature>
<feature type="binding site" evidence="2">
    <location>
        <begin position="63"/>
        <end position="64"/>
    </location>
    <ligand>
        <name>NAD(+)</name>
        <dbReference type="ChEBI" id="CHEBI:57540"/>
    </ligand>
</feature>
<feature type="binding site" evidence="2">
    <location>
        <begin position="82"/>
        <end position="86"/>
    </location>
    <ligand>
        <name>NAD(+)</name>
        <dbReference type="ChEBI" id="CHEBI:57540"/>
    </ligand>
</feature>
<feature type="binding site" evidence="1">
    <location>
        <position position="86"/>
    </location>
    <ligand>
        <name>substrate</name>
    </ligand>
</feature>
<feature type="binding site" evidence="2">
    <location>
        <position position="101"/>
    </location>
    <ligand>
        <name>NAD(+)</name>
        <dbReference type="ChEBI" id="CHEBI:57540"/>
    </ligand>
</feature>
<feature type="binding site" evidence="1">
    <location>
        <position position="126"/>
    </location>
    <ligand>
        <name>substrate</name>
    </ligand>
</feature>
<feature type="binding site" evidence="2">
    <location>
        <begin position="150"/>
        <end position="154"/>
    </location>
    <ligand>
        <name>NAD(+)</name>
        <dbReference type="ChEBI" id="CHEBI:57540"/>
    </ligand>
</feature>
<feature type="binding site" evidence="1">
    <location>
        <position position="179"/>
    </location>
    <ligand>
        <name>substrate</name>
    </ligand>
</feature>
<feature type="binding site" evidence="2">
    <location>
        <position position="180"/>
    </location>
    <ligand>
        <name>NAD(+)</name>
        <dbReference type="ChEBI" id="CHEBI:57540"/>
    </ligand>
</feature>
<feature type="binding site" evidence="1">
    <location>
        <begin position="189"/>
        <end position="190"/>
    </location>
    <ligand>
        <name>substrate</name>
    </ligand>
</feature>
<feature type="binding site" evidence="1">
    <location>
        <begin position="205"/>
        <end position="207"/>
    </location>
    <ligand>
        <name>substrate</name>
    </ligand>
</feature>
<feature type="binding site" evidence="1">
    <location>
        <position position="214"/>
    </location>
    <ligand>
        <name>substrate</name>
    </ligand>
</feature>
<feature type="binding site" evidence="1">
    <location>
        <position position="249"/>
    </location>
    <ligand>
        <name>substrate</name>
    </ligand>
</feature>
<feature type="binding site" evidence="1">
    <location>
        <begin position="272"/>
        <end position="276"/>
    </location>
    <ligand>
        <name>substrate</name>
    </ligand>
</feature>
<reference key="1">
    <citation type="journal article" date="1991" name="Mol. Gen. Genet.">
        <title>Genetics of streptomycin production in Streptomyces griseus: molecular structure and putative function of genes strELMB2N.</title>
        <authorList>
            <person name="Pissowotzki K."/>
            <person name="Mansouri K."/>
            <person name="Piepersberg W."/>
        </authorList>
    </citation>
    <scope>NUCLEOTIDE SEQUENCE [GENOMIC DNA]</scope>
    <scope>FUNCTION IN BIOSYNTHESIS OF THE STREPTOSE MOIETY OF STREPTOMYCIN</scope>
    <scope>PATHWAY</scope>
    <source>
        <strain>N2-3-11</strain>
    </source>
</reference>
<dbReference type="EC" id="4.2.1.46" evidence="2"/>
<dbReference type="EMBL" id="X62567">
    <property type="protein sequence ID" value="CAA44444.1"/>
    <property type="molecule type" value="Genomic_DNA"/>
</dbReference>
<dbReference type="PIR" id="S18617">
    <property type="entry name" value="DWSMGG"/>
</dbReference>
<dbReference type="SMR" id="P29782"/>
<dbReference type="UniPathway" id="UPA00066"/>
<dbReference type="GO" id="GO:0008460">
    <property type="term" value="F:dTDP-glucose 4,6-dehydratase activity"/>
    <property type="evidence" value="ECO:0000250"/>
    <property type="project" value="UniProtKB"/>
</dbReference>
<dbReference type="GO" id="GO:0009225">
    <property type="term" value="P:nucleotide-sugar metabolic process"/>
    <property type="evidence" value="ECO:0007669"/>
    <property type="project" value="InterPro"/>
</dbReference>
<dbReference type="GO" id="GO:0000271">
    <property type="term" value="P:polysaccharide biosynthetic process"/>
    <property type="evidence" value="ECO:0000250"/>
    <property type="project" value="UniProtKB"/>
</dbReference>
<dbReference type="GO" id="GO:0019872">
    <property type="term" value="P:streptomycin biosynthetic process"/>
    <property type="evidence" value="ECO:0007669"/>
    <property type="project" value="UniProtKB-UniPathway"/>
</dbReference>
<dbReference type="CDD" id="cd05246">
    <property type="entry name" value="dTDP_GD_SDR_e"/>
    <property type="match status" value="1"/>
</dbReference>
<dbReference type="Gene3D" id="3.40.50.720">
    <property type="entry name" value="NAD(P)-binding Rossmann-like Domain"/>
    <property type="match status" value="1"/>
</dbReference>
<dbReference type="Gene3D" id="3.90.25.10">
    <property type="entry name" value="UDP-galactose 4-epimerase, domain 1"/>
    <property type="match status" value="1"/>
</dbReference>
<dbReference type="InterPro" id="IPR005888">
    <property type="entry name" value="dTDP_Gluc_deHydtase"/>
</dbReference>
<dbReference type="InterPro" id="IPR016040">
    <property type="entry name" value="NAD(P)-bd_dom"/>
</dbReference>
<dbReference type="InterPro" id="IPR036291">
    <property type="entry name" value="NAD(P)-bd_dom_sf"/>
</dbReference>
<dbReference type="NCBIfam" id="TIGR01181">
    <property type="entry name" value="dTDP_gluc_dehyt"/>
    <property type="match status" value="1"/>
</dbReference>
<dbReference type="PANTHER" id="PTHR43000">
    <property type="entry name" value="DTDP-D-GLUCOSE 4,6-DEHYDRATASE-RELATED"/>
    <property type="match status" value="1"/>
</dbReference>
<dbReference type="Pfam" id="PF16363">
    <property type="entry name" value="GDP_Man_Dehyd"/>
    <property type="match status" value="1"/>
</dbReference>
<dbReference type="SUPFAM" id="SSF51735">
    <property type="entry name" value="NAD(P)-binding Rossmann-fold domains"/>
    <property type="match status" value="1"/>
</dbReference>
<accession>P29782</accession>
<keyword id="KW-0045">Antibiotic biosynthesis</keyword>
<keyword id="KW-0456">Lyase</keyword>
<keyword id="KW-0520">NAD</keyword>
<keyword id="KW-0759">Streptomycin biosynthesis</keyword>
<evidence type="ECO:0000250" key="1">
    <source>
        <dbReference type="UniProtKB" id="P26391"/>
    </source>
</evidence>
<evidence type="ECO:0000250" key="2">
    <source>
        <dbReference type="UniProtKB" id="P27830"/>
    </source>
</evidence>
<evidence type="ECO:0000269" key="3">
    <source>
    </source>
</evidence>
<evidence type="ECO:0000303" key="4">
    <source>
    </source>
</evidence>
<evidence type="ECO:0000305" key="5"/>
<evidence type="ECO:0000305" key="6">
    <source>
    </source>
</evidence>
<name>RMLB_STRGR</name>
<protein>
    <recommendedName>
        <fullName evidence="2">dTDP-glucose 4,6-dehydratase</fullName>
        <ecNumber evidence="2">4.2.1.46</ecNumber>
    </recommendedName>
</protein>